<comment type="catalytic activity">
    <reaction evidence="1">
        <text>uridine + ATP = UMP + ADP + H(+)</text>
        <dbReference type="Rhea" id="RHEA:16825"/>
        <dbReference type="ChEBI" id="CHEBI:15378"/>
        <dbReference type="ChEBI" id="CHEBI:16704"/>
        <dbReference type="ChEBI" id="CHEBI:30616"/>
        <dbReference type="ChEBI" id="CHEBI:57865"/>
        <dbReference type="ChEBI" id="CHEBI:456216"/>
        <dbReference type="EC" id="2.7.1.48"/>
    </reaction>
</comment>
<comment type="catalytic activity">
    <reaction evidence="1">
        <text>cytidine + ATP = CMP + ADP + H(+)</text>
        <dbReference type="Rhea" id="RHEA:24674"/>
        <dbReference type="ChEBI" id="CHEBI:15378"/>
        <dbReference type="ChEBI" id="CHEBI:17562"/>
        <dbReference type="ChEBI" id="CHEBI:30616"/>
        <dbReference type="ChEBI" id="CHEBI:60377"/>
        <dbReference type="ChEBI" id="CHEBI:456216"/>
        <dbReference type="EC" id="2.7.1.48"/>
    </reaction>
</comment>
<comment type="pathway">
    <text evidence="1">Pyrimidine metabolism; CTP biosynthesis via salvage pathway; CTP from cytidine: step 1/3.</text>
</comment>
<comment type="pathway">
    <text evidence="1">Pyrimidine metabolism; UMP biosynthesis via salvage pathway; UMP from uridine: step 1/1.</text>
</comment>
<comment type="subcellular location">
    <subcellularLocation>
        <location evidence="1">Cytoplasm</location>
    </subcellularLocation>
</comment>
<comment type="similarity">
    <text evidence="1">Belongs to the uridine kinase family.</text>
</comment>
<dbReference type="EC" id="2.7.1.48" evidence="1"/>
<dbReference type="EMBL" id="BA000017">
    <property type="protein sequence ID" value="BAB57773.1"/>
    <property type="molecule type" value="Genomic_DNA"/>
</dbReference>
<dbReference type="RefSeq" id="WP_000648617.1">
    <property type="nucleotide sequence ID" value="NC_002758.2"/>
</dbReference>
<dbReference type="SMR" id="P67410"/>
<dbReference type="KEGG" id="sav:SAV1611"/>
<dbReference type="HOGENOM" id="CLU_021278_1_2_9"/>
<dbReference type="PhylomeDB" id="P67410"/>
<dbReference type="UniPathway" id="UPA00574">
    <property type="reaction ID" value="UER00637"/>
</dbReference>
<dbReference type="UniPathway" id="UPA00579">
    <property type="reaction ID" value="UER00640"/>
</dbReference>
<dbReference type="Proteomes" id="UP000002481">
    <property type="component" value="Chromosome"/>
</dbReference>
<dbReference type="GO" id="GO:0005737">
    <property type="term" value="C:cytoplasm"/>
    <property type="evidence" value="ECO:0007669"/>
    <property type="project" value="UniProtKB-SubCell"/>
</dbReference>
<dbReference type="GO" id="GO:0005524">
    <property type="term" value="F:ATP binding"/>
    <property type="evidence" value="ECO:0007669"/>
    <property type="project" value="UniProtKB-UniRule"/>
</dbReference>
<dbReference type="GO" id="GO:0043771">
    <property type="term" value="F:cytidine kinase activity"/>
    <property type="evidence" value="ECO:0007669"/>
    <property type="project" value="RHEA"/>
</dbReference>
<dbReference type="GO" id="GO:0004849">
    <property type="term" value="F:uridine kinase activity"/>
    <property type="evidence" value="ECO:0007669"/>
    <property type="project" value="UniProtKB-UniRule"/>
</dbReference>
<dbReference type="GO" id="GO:0044211">
    <property type="term" value="P:CTP salvage"/>
    <property type="evidence" value="ECO:0007669"/>
    <property type="project" value="UniProtKB-UniRule"/>
</dbReference>
<dbReference type="GO" id="GO:0044206">
    <property type="term" value="P:UMP salvage"/>
    <property type="evidence" value="ECO:0007669"/>
    <property type="project" value="UniProtKB-UniRule"/>
</dbReference>
<dbReference type="CDD" id="cd02023">
    <property type="entry name" value="UMPK"/>
    <property type="match status" value="1"/>
</dbReference>
<dbReference type="Gene3D" id="3.40.50.300">
    <property type="entry name" value="P-loop containing nucleotide triphosphate hydrolases"/>
    <property type="match status" value="1"/>
</dbReference>
<dbReference type="HAMAP" id="MF_00551">
    <property type="entry name" value="Uridine_kinase"/>
    <property type="match status" value="1"/>
</dbReference>
<dbReference type="InterPro" id="IPR027417">
    <property type="entry name" value="P-loop_NTPase"/>
</dbReference>
<dbReference type="InterPro" id="IPR006083">
    <property type="entry name" value="PRK/URK"/>
</dbReference>
<dbReference type="InterPro" id="IPR026008">
    <property type="entry name" value="Uridine_kinase"/>
</dbReference>
<dbReference type="InterPro" id="IPR000764">
    <property type="entry name" value="Uridine_kinase-like"/>
</dbReference>
<dbReference type="NCBIfam" id="NF004018">
    <property type="entry name" value="PRK05480.1"/>
    <property type="match status" value="1"/>
</dbReference>
<dbReference type="NCBIfam" id="TIGR00235">
    <property type="entry name" value="udk"/>
    <property type="match status" value="1"/>
</dbReference>
<dbReference type="PANTHER" id="PTHR10285">
    <property type="entry name" value="URIDINE KINASE"/>
    <property type="match status" value="1"/>
</dbReference>
<dbReference type="Pfam" id="PF00485">
    <property type="entry name" value="PRK"/>
    <property type="match status" value="1"/>
</dbReference>
<dbReference type="PRINTS" id="PR00988">
    <property type="entry name" value="URIDINKINASE"/>
</dbReference>
<dbReference type="SUPFAM" id="SSF52540">
    <property type="entry name" value="P-loop containing nucleoside triphosphate hydrolases"/>
    <property type="match status" value="1"/>
</dbReference>
<protein>
    <recommendedName>
        <fullName evidence="1">Uridine kinase</fullName>
        <ecNumber evidence="1">2.7.1.48</ecNumber>
    </recommendedName>
    <alternativeName>
        <fullName evidence="1">Cytidine monophosphokinase</fullName>
    </alternativeName>
    <alternativeName>
        <fullName evidence="1">Uridine monophosphokinase</fullName>
    </alternativeName>
</protein>
<organism>
    <name type="scientific">Staphylococcus aureus (strain Mu50 / ATCC 700699)</name>
    <dbReference type="NCBI Taxonomy" id="158878"/>
    <lineage>
        <taxon>Bacteria</taxon>
        <taxon>Bacillati</taxon>
        <taxon>Bacillota</taxon>
        <taxon>Bacilli</taxon>
        <taxon>Bacillales</taxon>
        <taxon>Staphylococcaceae</taxon>
        <taxon>Staphylococcus</taxon>
    </lineage>
</organism>
<evidence type="ECO:0000255" key="1">
    <source>
        <dbReference type="HAMAP-Rule" id="MF_00551"/>
    </source>
</evidence>
<feature type="chain" id="PRO_0000164489" description="Uridine kinase">
    <location>
        <begin position="1"/>
        <end position="207"/>
    </location>
</feature>
<feature type="binding site" evidence="1">
    <location>
        <begin position="11"/>
        <end position="18"/>
    </location>
    <ligand>
        <name>ATP</name>
        <dbReference type="ChEBI" id="CHEBI:30616"/>
    </ligand>
</feature>
<reference key="1">
    <citation type="journal article" date="2001" name="Lancet">
        <title>Whole genome sequencing of meticillin-resistant Staphylococcus aureus.</title>
        <authorList>
            <person name="Kuroda M."/>
            <person name="Ohta T."/>
            <person name="Uchiyama I."/>
            <person name="Baba T."/>
            <person name="Yuzawa H."/>
            <person name="Kobayashi I."/>
            <person name="Cui L."/>
            <person name="Oguchi A."/>
            <person name="Aoki K."/>
            <person name="Nagai Y."/>
            <person name="Lian J.-Q."/>
            <person name="Ito T."/>
            <person name="Kanamori M."/>
            <person name="Matsumaru H."/>
            <person name="Maruyama A."/>
            <person name="Murakami H."/>
            <person name="Hosoyama A."/>
            <person name="Mizutani-Ui Y."/>
            <person name="Takahashi N.K."/>
            <person name="Sawano T."/>
            <person name="Inoue R."/>
            <person name="Kaito C."/>
            <person name="Sekimizu K."/>
            <person name="Hirakawa H."/>
            <person name="Kuhara S."/>
            <person name="Goto S."/>
            <person name="Yabuzaki J."/>
            <person name="Kanehisa M."/>
            <person name="Yamashita A."/>
            <person name="Oshima K."/>
            <person name="Furuya K."/>
            <person name="Yoshino C."/>
            <person name="Shiba T."/>
            <person name="Hattori M."/>
            <person name="Ogasawara N."/>
            <person name="Hayashi H."/>
            <person name="Hiramatsu K."/>
        </authorList>
    </citation>
    <scope>NUCLEOTIDE SEQUENCE [LARGE SCALE GENOMIC DNA]</scope>
    <source>
        <strain>Mu50 / ATCC 700699</strain>
    </source>
</reference>
<sequence length="207" mass="23505">MKATTIIGIAGGSGSGKTTVTNEIMKNLEGHSVALLAQDYYYKDQKHLTFDERLETNYDHPFAFDNDLLIENLKDLKNGKAVEVPTYDYASHTRSDITIDFKPKDVIIVEGIFALENKVLRDMMDVKIYVDTDADLRILRRLTRDTKERGRSMDSVINQYLSVVRPMHDQFIEPTKKYADIIIPEGGSNKVAIDIMTTKIQSLVSKQ</sequence>
<gene>
    <name evidence="1" type="primary">udk</name>
    <name type="ordered locus">SAV1611</name>
</gene>
<keyword id="KW-0067">ATP-binding</keyword>
<keyword id="KW-0963">Cytoplasm</keyword>
<keyword id="KW-0418">Kinase</keyword>
<keyword id="KW-0547">Nucleotide-binding</keyword>
<keyword id="KW-0808">Transferase</keyword>
<accession>P67410</accession>
<accession>Q99TN8</accession>
<proteinExistence type="inferred from homology"/>
<name>URK_STAAM</name>